<keyword id="KW-0067">ATP-binding</keyword>
<keyword id="KW-0963">Cytoplasm</keyword>
<keyword id="KW-0206">Cytoskeleton</keyword>
<keyword id="KW-0547">Nucleotide-binding</keyword>
<organism>
    <name type="scientific">Pseudotsuga menziesii</name>
    <name type="common">Douglas-fir</name>
    <name type="synonym">Abies menziesii</name>
    <dbReference type="NCBI Taxonomy" id="3357"/>
    <lineage>
        <taxon>Eukaryota</taxon>
        <taxon>Viridiplantae</taxon>
        <taxon>Streptophyta</taxon>
        <taxon>Embryophyta</taxon>
        <taxon>Tracheophyta</taxon>
        <taxon>Spermatophyta</taxon>
        <taxon>Pinopsida</taxon>
        <taxon>Pinidae</taxon>
        <taxon>Conifers I</taxon>
        <taxon>Pinales</taxon>
        <taxon>Pinaceae</taxon>
        <taxon>Pseudotsuga</taxon>
    </lineage>
</organism>
<dbReference type="SMR" id="P85937"/>
<dbReference type="GO" id="GO:0005737">
    <property type="term" value="C:cytoplasm"/>
    <property type="evidence" value="ECO:0007669"/>
    <property type="project" value="UniProtKB-KW"/>
</dbReference>
<dbReference type="GO" id="GO:0005856">
    <property type="term" value="C:cytoskeleton"/>
    <property type="evidence" value="ECO:0007669"/>
    <property type="project" value="UniProtKB-SubCell"/>
</dbReference>
<dbReference type="GO" id="GO:0005524">
    <property type="term" value="F:ATP binding"/>
    <property type="evidence" value="ECO:0007669"/>
    <property type="project" value="UniProtKB-KW"/>
</dbReference>
<dbReference type="Gene3D" id="3.90.640.10">
    <property type="entry name" value="Actin, Chain A, domain 4"/>
    <property type="match status" value="1"/>
</dbReference>
<reference key="1">
    <citation type="journal article" date="2008" name="J. Proteomics">
        <title>A proteomics approach to identify proteins differentially expressed in Douglas-fir seedlings infected by Phellinus sulphurascens.</title>
        <authorList>
            <person name="Islam M.A."/>
            <person name="Sturrock R.N."/>
            <person name="Ekramoddoullah A.K.M."/>
        </authorList>
    </citation>
    <scope>IDENTIFICATION BY MASS SPECTROMETRY</scope>
</reference>
<feature type="chain" id="PRO_0000347321" description="Actin-2">
    <location>
        <begin position="1" status="less than"/>
        <end position="32" status="greater than"/>
    </location>
</feature>
<feature type="non-consecutive residues" evidence="4">
    <location>
        <begin position="16"/>
        <end position="17"/>
    </location>
</feature>
<feature type="non-terminal residue" evidence="4">
    <location>
        <position position="1"/>
    </location>
</feature>
<feature type="non-terminal residue" evidence="4">
    <location>
        <position position="32"/>
    </location>
</feature>
<proteinExistence type="evidence at protein level"/>
<accession>P85937</accession>
<name>ACT2_PSEMZ</name>
<sequence length="32" mass="3586">LAYVALDYEQELETAKSYELPDGQVITIGAER</sequence>
<protein>
    <recommendedName>
        <fullName evidence="2">Actin-2</fullName>
    </recommendedName>
</protein>
<evidence type="ECO:0000250" key="1"/>
<evidence type="ECO:0000250" key="2">
    <source>
        <dbReference type="UniProtKB" id="P30172"/>
    </source>
</evidence>
<evidence type="ECO:0000255" key="3"/>
<evidence type="ECO:0000303" key="4">
    <source>
    </source>
</evidence>
<comment type="function">
    <text evidence="1">Actins are highly conserved proteins that are involved in various types of cell motility and are ubiquitously expressed in all eukaryotic cells. Essential component of cell cytoskeleton; plays an important role in cytoplasmic streaming, cell shape determination, cell division, organelle movement and extension growth (By similarity).</text>
</comment>
<comment type="subcellular location">
    <subcellularLocation>
        <location evidence="1">Cytoplasm</location>
        <location evidence="1">Cytoskeleton</location>
    </subcellularLocation>
</comment>
<comment type="similarity">
    <text evidence="3">Belongs to the actin family.</text>
</comment>